<protein>
    <recommendedName>
        <fullName evidence="1">Chaperonin GroEL 1</fullName>
        <ecNumber evidence="1">5.6.1.7</ecNumber>
    </recommendedName>
    <alternativeName>
        <fullName evidence="1">60 kDa chaperonin 1</fullName>
    </alternativeName>
    <alternativeName>
        <fullName evidence="1">Chaperonin-60 1</fullName>
        <shortName evidence="1">Cpn60 1</shortName>
    </alternativeName>
</protein>
<comment type="function">
    <text evidence="1">Together with its co-chaperonin GroES, plays an essential role in assisting protein folding. The GroEL-GroES system forms a nano-cage that allows encapsulation of the non-native substrate proteins and provides a physical environment optimized to promote and accelerate protein folding.</text>
</comment>
<comment type="catalytic activity">
    <reaction evidence="1">
        <text>ATP + H2O + a folded polypeptide = ADP + phosphate + an unfolded polypeptide.</text>
        <dbReference type="EC" id="5.6.1.7"/>
    </reaction>
</comment>
<comment type="subunit">
    <text evidence="1">Forms a cylinder of 14 subunits composed of two heptameric rings stacked back-to-back. Interacts with the co-chaperonin GroES.</text>
</comment>
<comment type="subcellular location">
    <subcellularLocation>
        <location evidence="1">Cytoplasm</location>
    </subcellularLocation>
</comment>
<comment type="similarity">
    <text evidence="1">Belongs to the chaperonin (HSP60) family.</text>
</comment>
<proteinExistence type="inferred from homology"/>
<keyword id="KW-0067">ATP-binding</keyword>
<keyword id="KW-0143">Chaperone</keyword>
<keyword id="KW-0963">Cytoplasm</keyword>
<keyword id="KW-0413">Isomerase</keyword>
<keyword id="KW-0547">Nucleotide-binding</keyword>
<organism>
    <name type="scientific">Prochlorococcus marinus (strain NATL1A)</name>
    <dbReference type="NCBI Taxonomy" id="167555"/>
    <lineage>
        <taxon>Bacteria</taxon>
        <taxon>Bacillati</taxon>
        <taxon>Cyanobacteriota</taxon>
        <taxon>Cyanophyceae</taxon>
        <taxon>Synechococcales</taxon>
        <taxon>Prochlorococcaceae</taxon>
        <taxon>Prochlorococcus</taxon>
    </lineage>
</organism>
<feature type="chain" id="PRO_0000332048" description="Chaperonin GroEL 1">
    <location>
        <begin position="1"/>
        <end position="563"/>
    </location>
</feature>
<feature type="region of interest" description="Disordered" evidence="2">
    <location>
        <begin position="520"/>
        <end position="541"/>
    </location>
</feature>
<feature type="compositionally biased region" description="Gly residues" evidence="2">
    <location>
        <begin position="530"/>
        <end position="541"/>
    </location>
</feature>
<feature type="binding site" evidence="1">
    <location>
        <begin position="29"/>
        <end position="32"/>
    </location>
    <ligand>
        <name>ATP</name>
        <dbReference type="ChEBI" id="CHEBI:30616"/>
    </ligand>
</feature>
<feature type="binding site" evidence="1">
    <location>
        <begin position="86"/>
        <end position="90"/>
    </location>
    <ligand>
        <name>ATP</name>
        <dbReference type="ChEBI" id="CHEBI:30616"/>
    </ligand>
</feature>
<feature type="binding site" evidence="1">
    <location>
        <position position="413"/>
    </location>
    <ligand>
        <name>ATP</name>
        <dbReference type="ChEBI" id="CHEBI:30616"/>
    </ligand>
</feature>
<feature type="binding site" evidence="1">
    <location>
        <position position="492"/>
    </location>
    <ligand>
        <name>ATP</name>
        <dbReference type="ChEBI" id="CHEBI:30616"/>
    </ligand>
</feature>
<dbReference type="EC" id="5.6.1.7" evidence="1"/>
<dbReference type="EMBL" id="CP000553">
    <property type="protein sequence ID" value="ABM75068.1"/>
    <property type="molecule type" value="Genomic_DNA"/>
</dbReference>
<dbReference type="RefSeq" id="WP_011823251.1">
    <property type="nucleotide sequence ID" value="NC_008819.1"/>
</dbReference>
<dbReference type="SMR" id="A2C0Q8"/>
<dbReference type="KEGG" id="pme:NATL1_05061"/>
<dbReference type="eggNOG" id="COG0459">
    <property type="taxonomic scope" value="Bacteria"/>
</dbReference>
<dbReference type="HOGENOM" id="CLU_016503_3_0_3"/>
<dbReference type="Proteomes" id="UP000002592">
    <property type="component" value="Chromosome"/>
</dbReference>
<dbReference type="GO" id="GO:0005737">
    <property type="term" value="C:cytoplasm"/>
    <property type="evidence" value="ECO:0007669"/>
    <property type="project" value="UniProtKB-SubCell"/>
</dbReference>
<dbReference type="GO" id="GO:0005524">
    <property type="term" value="F:ATP binding"/>
    <property type="evidence" value="ECO:0007669"/>
    <property type="project" value="UniProtKB-UniRule"/>
</dbReference>
<dbReference type="GO" id="GO:0140662">
    <property type="term" value="F:ATP-dependent protein folding chaperone"/>
    <property type="evidence" value="ECO:0007669"/>
    <property type="project" value="InterPro"/>
</dbReference>
<dbReference type="GO" id="GO:0016853">
    <property type="term" value="F:isomerase activity"/>
    <property type="evidence" value="ECO:0007669"/>
    <property type="project" value="UniProtKB-KW"/>
</dbReference>
<dbReference type="GO" id="GO:0051082">
    <property type="term" value="F:unfolded protein binding"/>
    <property type="evidence" value="ECO:0007669"/>
    <property type="project" value="UniProtKB-UniRule"/>
</dbReference>
<dbReference type="GO" id="GO:0042026">
    <property type="term" value="P:protein refolding"/>
    <property type="evidence" value="ECO:0007669"/>
    <property type="project" value="UniProtKB-UniRule"/>
</dbReference>
<dbReference type="CDD" id="cd03344">
    <property type="entry name" value="GroEL"/>
    <property type="match status" value="1"/>
</dbReference>
<dbReference type="FunFam" id="3.50.7.10:FF:000001">
    <property type="entry name" value="60 kDa chaperonin"/>
    <property type="match status" value="1"/>
</dbReference>
<dbReference type="Gene3D" id="3.50.7.10">
    <property type="entry name" value="GroEL"/>
    <property type="match status" value="1"/>
</dbReference>
<dbReference type="Gene3D" id="1.10.560.10">
    <property type="entry name" value="GroEL-like equatorial domain"/>
    <property type="match status" value="1"/>
</dbReference>
<dbReference type="Gene3D" id="3.30.260.10">
    <property type="entry name" value="TCP-1-like chaperonin intermediate domain"/>
    <property type="match status" value="1"/>
</dbReference>
<dbReference type="HAMAP" id="MF_00600">
    <property type="entry name" value="CH60"/>
    <property type="match status" value="1"/>
</dbReference>
<dbReference type="InterPro" id="IPR018370">
    <property type="entry name" value="Chaperonin_Cpn60_CS"/>
</dbReference>
<dbReference type="InterPro" id="IPR001844">
    <property type="entry name" value="Cpn60/GroEL"/>
</dbReference>
<dbReference type="InterPro" id="IPR002423">
    <property type="entry name" value="Cpn60/GroEL/TCP-1"/>
</dbReference>
<dbReference type="InterPro" id="IPR027409">
    <property type="entry name" value="GroEL-like_apical_dom_sf"/>
</dbReference>
<dbReference type="InterPro" id="IPR027413">
    <property type="entry name" value="GROEL-like_equatorial_sf"/>
</dbReference>
<dbReference type="InterPro" id="IPR027410">
    <property type="entry name" value="TCP-1-like_intermed_sf"/>
</dbReference>
<dbReference type="NCBIfam" id="TIGR02348">
    <property type="entry name" value="GroEL"/>
    <property type="match status" value="1"/>
</dbReference>
<dbReference type="NCBIfam" id="NF000592">
    <property type="entry name" value="PRK00013.1"/>
    <property type="match status" value="1"/>
</dbReference>
<dbReference type="NCBIfam" id="NF009487">
    <property type="entry name" value="PRK12849.1"/>
    <property type="match status" value="1"/>
</dbReference>
<dbReference type="NCBIfam" id="NF009488">
    <property type="entry name" value="PRK12850.1"/>
    <property type="match status" value="1"/>
</dbReference>
<dbReference type="NCBIfam" id="NF009489">
    <property type="entry name" value="PRK12851.1"/>
    <property type="match status" value="1"/>
</dbReference>
<dbReference type="PANTHER" id="PTHR45633">
    <property type="entry name" value="60 KDA HEAT SHOCK PROTEIN, MITOCHONDRIAL"/>
    <property type="match status" value="1"/>
</dbReference>
<dbReference type="Pfam" id="PF00118">
    <property type="entry name" value="Cpn60_TCP1"/>
    <property type="match status" value="1"/>
</dbReference>
<dbReference type="PRINTS" id="PR00298">
    <property type="entry name" value="CHAPERONIN60"/>
</dbReference>
<dbReference type="SUPFAM" id="SSF52029">
    <property type="entry name" value="GroEL apical domain-like"/>
    <property type="match status" value="1"/>
</dbReference>
<dbReference type="SUPFAM" id="SSF48592">
    <property type="entry name" value="GroEL equatorial domain-like"/>
    <property type="match status" value="1"/>
</dbReference>
<dbReference type="SUPFAM" id="SSF54849">
    <property type="entry name" value="GroEL-intermediate domain like"/>
    <property type="match status" value="1"/>
</dbReference>
<dbReference type="PROSITE" id="PS00296">
    <property type="entry name" value="CHAPERONINS_CPN60"/>
    <property type="match status" value="1"/>
</dbReference>
<reference key="1">
    <citation type="journal article" date="2007" name="PLoS Genet.">
        <title>Patterns and implications of gene gain and loss in the evolution of Prochlorococcus.</title>
        <authorList>
            <person name="Kettler G.C."/>
            <person name="Martiny A.C."/>
            <person name="Huang K."/>
            <person name="Zucker J."/>
            <person name="Coleman M.L."/>
            <person name="Rodrigue S."/>
            <person name="Chen F."/>
            <person name="Lapidus A."/>
            <person name="Ferriera S."/>
            <person name="Johnson J."/>
            <person name="Steglich C."/>
            <person name="Church G.M."/>
            <person name="Richardson P."/>
            <person name="Chisholm S.W."/>
        </authorList>
    </citation>
    <scope>NUCLEOTIDE SEQUENCE [LARGE SCALE GENOMIC DNA]</scope>
    <source>
        <strain>NATL1A</strain>
    </source>
</reference>
<sequence length="563" mass="59052">MAKLLSFSDESRGALEKGVNNLANALKVTIGPKGRNVVIEKKFGAPDIVNDGVTIAKEIDLEDPFENIGAKLIEQVASKTKEKAGDGTTTATVLAQFMVQEGLRNTAAGASPIELRRGMEKAVAQIVDDLKKKSKSVSGDAIKQVATVSAGGDEEIGSMIADAIDKVSFDGVITVEESKSLATELDITEGMAFDRGYSSPYFVTDEDRLICEFENPSILITDKKISSIADLIPVLETVQKNGTPLIILAEEVEGEALATLVVNKNRGVLQVAAVRAPSFGERRKAALGDIAVLTGGTLISEDKAMSLEKVQISDLGQARRVTITKDSTTIVANDNQNTELSNRIASIKRELDETDSEYDQEKLNERIAKLAGGVAVIKVGAPTETELKNRKLRIEDALNATRAAIEEGIVAGGGTTLLELSEGLGDLAKKLEGDQKTGVEIIKRALTAPTKQIAINAGFNGDVVVSDIKRLGKGFNAQTGEYVDLLEAGILDASKVIRLALQDAVSIASLLITTEVVIADKPEPPSAPGAEGGDPMGGMGGMGGMGGMGGMGGMGGMGMPGMM</sequence>
<evidence type="ECO:0000255" key="1">
    <source>
        <dbReference type="HAMAP-Rule" id="MF_00600"/>
    </source>
</evidence>
<evidence type="ECO:0000256" key="2">
    <source>
        <dbReference type="SAM" id="MobiDB-lite"/>
    </source>
</evidence>
<gene>
    <name evidence="1" type="primary">groEL1</name>
    <name evidence="1" type="synonym">groL1</name>
    <name type="ordered locus">NATL1_05061</name>
</gene>
<accession>A2C0Q8</accession>
<name>CH601_PROM1</name>